<protein>
    <recommendedName>
        <fullName>6-phosphogluconate dehydrogenase, NAD(+)-dependent, decarboxylating</fullName>
        <ecNumber>1.1.1.343</ecNumber>
    </recommendedName>
</protein>
<proteinExistence type="evidence at protein level"/>
<accession>P12013</accession>
<gene>
    <name type="primary">gntZ</name>
    <name type="ordered locus">BSU40080</name>
</gene>
<evidence type="ECO:0000250" key="1"/>
<evidence type="ECO:0000269" key="2">
    <source>
    </source>
</evidence>
<evidence type="ECO:0000305" key="3"/>
<dbReference type="EC" id="1.1.1.343"/>
<dbReference type="EMBL" id="J02584">
    <property type="protein sequence ID" value="AAA56927.1"/>
    <property type="molecule type" value="Genomic_DNA"/>
</dbReference>
<dbReference type="EMBL" id="AB005554">
    <property type="protein sequence ID" value="BAA21576.1"/>
    <property type="molecule type" value="Genomic_DNA"/>
</dbReference>
<dbReference type="EMBL" id="AL009126">
    <property type="protein sequence ID" value="CAB16045.1"/>
    <property type="molecule type" value="Genomic_DNA"/>
</dbReference>
<dbReference type="EMBL" id="D78193">
    <property type="protein sequence ID" value="BAA11267.1"/>
    <property type="molecule type" value="Genomic_DNA"/>
</dbReference>
<dbReference type="PIR" id="D26190">
    <property type="entry name" value="D26190"/>
</dbReference>
<dbReference type="RefSeq" id="NP_391888.1">
    <property type="nucleotide sequence ID" value="NC_000964.3"/>
</dbReference>
<dbReference type="SMR" id="P12013"/>
<dbReference type="FunCoup" id="P12013">
    <property type="interactions" value="665"/>
</dbReference>
<dbReference type="STRING" id="224308.BSU40080"/>
<dbReference type="jPOST" id="P12013"/>
<dbReference type="PaxDb" id="224308-BSU40080"/>
<dbReference type="EnsemblBacteria" id="CAB16045">
    <property type="protein sequence ID" value="CAB16045"/>
    <property type="gene ID" value="BSU_40080"/>
</dbReference>
<dbReference type="GeneID" id="937716"/>
<dbReference type="KEGG" id="bsu:BSU40080"/>
<dbReference type="PATRIC" id="fig|224308.179.peg.4335"/>
<dbReference type="eggNOG" id="COG0362">
    <property type="taxonomic scope" value="Bacteria"/>
</dbReference>
<dbReference type="InParanoid" id="P12013"/>
<dbReference type="OrthoDB" id="9804542at2"/>
<dbReference type="PhylomeDB" id="P12013"/>
<dbReference type="BioCyc" id="BSUB:BSU40080-MONOMER"/>
<dbReference type="BRENDA" id="1.1.1.343">
    <property type="organism ID" value="658"/>
</dbReference>
<dbReference type="Proteomes" id="UP000001570">
    <property type="component" value="Chromosome"/>
</dbReference>
<dbReference type="GO" id="GO:0005829">
    <property type="term" value="C:cytosol"/>
    <property type="evidence" value="ECO:0000318"/>
    <property type="project" value="GO_Central"/>
</dbReference>
<dbReference type="GO" id="GO:0050661">
    <property type="term" value="F:NADP binding"/>
    <property type="evidence" value="ECO:0000318"/>
    <property type="project" value="GO_Central"/>
</dbReference>
<dbReference type="GO" id="GO:0004616">
    <property type="term" value="F:phosphogluconate dehydrogenase (decarboxylating) activity"/>
    <property type="evidence" value="ECO:0000318"/>
    <property type="project" value="GO_Central"/>
</dbReference>
<dbReference type="GO" id="GO:0019521">
    <property type="term" value="P:D-gluconate metabolic process"/>
    <property type="evidence" value="ECO:0007669"/>
    <property type="project" value="UniProtKB-KW"/>
</dbReference>
<dbReference type="GO" id="GO:0016054">
    <property type="term" value="P:organic acid catabolic process"/>
    <property type="evidence" value="ECO:0007669"/>
    <property type="project" value="UniProtKB-ARBA"/>
</dbReference>
<dbReference type="GO" id="GO:0009051">
    <property type="term" value="P:pentose-phosphate shunt, oxidative branch"/>
    <property type="evidence" value="ECO:0000318"/>
    <property type="project" value="GO_Central"/>
</dbReference>
<dbReference type="FunFam" id="1.10.1040.10:FF:000002">
    <property type="entry name" value="6-phosphogluconate dehydrogenase, decarboxylating"/>
    <property type="match status" value="1"/>
</dbReference>
<dbReference type="FunFam" id="1.20.5.320:FF:000001">
    <property type="entry name" value="6-phosphogluconate dehydrogenase, decarboxylating"/>
    <property type="match status" value="1"/>
</dbReference>
<dbReference type="FunFam" id="3.40.50.720:FF:000007">
    <property type="entry name" value="6-phosphogluconate dehydrogenase, decarboxylating"/>
    <property type="match status" value="1"/>
</dbReference>
<dbReference type="Gene3D" id="1.20.5.320">
    <property type="entry name" value="6-Phosphogluconate Dehydrogenase, domain 3"/>
    <property type="match status" value="1"/>
</dbReference>
<dbReference type="Gene3D" id="1.10.1040.10">
    <property type="entry name" value="N-(1-d-carboxylethyl)-l-norvaline Dehydrogenase, domain 2"/>
    <property type="match status" value="1"/>
</dbReference>
<dbReference type="Gene3D" id="3.40.50.720">
    <property type="entry name" value="NAD(P)-binding Rossmann-like Domain"/>
    <property type="match status" value="1"/>
</dbReference>
<dbReference type="InterPro" id="IPR008927">
    <property type="entry name" value="6-PGluconate_DH-like_C_sf"/>
</dbReference>
<dbReference type="InterPro" id="IPR013328">
    <property type="entry name" value="6PGD_dom2"/>
</dbReference>
<dbReference type="InterPro" id="IPR006114">
    <property type="entry name" value="6PGDH_C"/>
</dbReference>
<dbReference type="InterPro" id="IPR006113">
    <property type="entry name" value="6PGDH_Gnd/GntZ"/>
</dbReference>
<dbReference type="InterPro" id="IPR006115">
    <property type="entry name" value="6PGDH_NADP-bd"/>
</dbReference>
<dbReference type="InterPro" id="IPR006184">
    <property type="entry name" value="6PGdom_BS"/>
</dbReference>
<dbReference type="InterPro" id="IPR036291">
    <property type="entry name" value="NAD(P)-bd_dom_sf"/>
</dbReference>
<dbReference type="InterPro" id="IPR006183">
    <property type="entry name" value="Pgluconate_DH"/>
</dbReference>
<dbReference type="NCBIfam" id="TIGR00873">
    <property type="entry name" value="gnd"/>
    <property type="match status" value="1"/>
</dbReference>
<dbReference type="NCBIfam" id="NF006765">
    <property type="entry name" value="PRK09287.1"/>
    <property type="match status" value="1"/>
</dbReference>
<dbReference type="PANTHER" id="PTHR11811">
    <property type="entry name" value="6-PHOSPHOGLUCONATE DEHYDROGENASE"/>
    <property type="match status" value="1"/>
</dbReference>
<dbReference type="Pfam" id="PF00393">
    <property type="entry name" value="6PGD"/>
    <property type="match status" value="1"/>
</dbReference>
<dbReference type="Pfam" id="PF03446">
    <property type="entry name" value="NAD_binding_2"/>
    <property type="match status" value="1"/>
</dbReference>
<dbReference type="PIRSF" id="PIRSF000109">
    <property type="entry name" value="6PGD"/>
    <property type="match status" value="1"/>
</dbReference>
<dbReference type="PRINTS" id="PR00076">
    <property type="entry name" value="6PGDHDRGNASE"/>
</dbReference>
<dbReference type="SMART" id="SM01350">
    <property type="entry name" value="6PGD"/>
    <property type="match status" value="1"/>
</dbReference>
<dbReference type="SUPFAM" id="SSF48179">
    <property type="entry name" value="6-phosphogluconate dehydrogenase C-terminal domain-like"/>
    <property type="match status" value="1"/>
</dbReference>
<dbReference type="SUPFAM" id="SSF51735">
    <property type="entry name" value="NAD(P)-binding Rossmann-fold domains"/>
    <property type="match status" value="1"/>
</dbReference>
<dbReference type="PROSITE" id="PS00461">
    <property type="entry name" value="6PGD"/>
    <property type="match status" value="1"/>
</dbReference>
<feature type="chain" id="PRO_0000090026" description="6-phosphogluconate dehydrogenase, NAD(+)-dependent, decarboxylating">
    <location>
        <begin position="1"/>
        <end position="468"/>
    </location>
</feature>
<feature type="active site" description="Proton acceptor" evidence="1">
    <location>
        <position position="181"/>
    </location>
</feature>
<feature type="active site" description="Proton donor" evidence="1">
    <location>
        <position position="188"/>
    </location>
</feature>
<feature type="binding site" evidence="1">
    <location>
        <begin position="9"/>
        <end position="14"/>
    </location>
    <ligand>
        <name>NAD(+)</name>
        <dbReference type="ChEBI" id="CHEBI:57540"/>
    </ligand>
</feature>
<feature type="binding site" evidence="1">
    <location>
        <begin position="32"/>
        <end position="34"/>
    </location>
    <ligand>
        <name>NAD(+)</name>
        <dbReference type="ChEBI" id="CHEBI:57540"/>
    </ligand>
</feature>
<feature type="binding site" evidence="1">
    <location>
        <begin position="73"/>
        <end position="75"/>
    </location>
    <ligand>
        <name>NAD(+)</name>
        <dbReference type="ChEBI" id="CHEBI:57540"/>
    </ligand>
</feature>
<feature type="binding site" evidence="1">
    <location>
        <position position="101"/>
    </location>
    <ligand>
        <name>NAD(+)</name>
        <dbReference type="ChEBI" id="CHEBI:57540"/>
    </ligand>
</feature>
<feature type="binding site" description="in other chain" evidence="1">
    <location>
        <position position="101"/>
    </location>
    <ligand>
        <name>substrate</name>
        <note>ligand shared between dimeric partners</note>
    </ligand>
</feature>
<feature type="binding site" description="in other chain" evidence="1">
    <location>
        <begin position="127"/>
        <end position="129"/>
    </location>
    <ligand>
        <name>substrate</name>
        <note>ligand shared between dimeric partners</note>
    </ligand>
</feature>
<feature type="binding site" description="in other chain" evidence="1">
    <location>
        <begin position="184"/>
        <end position="185"/>
    </location>
    <ligand>
        <name>substrate</name>
        <note>ligand shared between dimeric partners</note>
    </ligand>
</feature>
<feature type="binding site" description="in other chain" evidence="1">
    <location>
        <position position="189"/>
    </location>
    <ligand>
        <name>substrate</name>
        <note>ligand shared between dimeric partners</note>
    </ligand>
</feature>
<feature type="binding site" description="in other chain" evidence="1">
    <location>
        <position position="259"/>
    </location>
    <ligand>
        <name>substrate</name>
        <note>ligand shared between dimeric partners</note>
    </ligand>
</feature>
<feature type="binding site" description="in other chain" evidence="1">
    <location>
        <position position="286"/>
    </location>
    <ligand>
        <name>substrate</name>
        <note>ligand shared between dimeric partners</note>
    </ligand>
</feature>
<feature type="binding site" evidence="1">
    <location>
        <position position="445"/>
    </location>
    <ligand>
        <name>substrate</name>
        <note>ligand shared between dimeric partners</note>
    </ligand>
</feature>
<feature type="binding site" evidence="1">
    <location>
        <position position="451"/>
    </location>
    <ligand>
        <name>substrate</name>
        <note>ligand shared between dimeric partners</note>
    </ligand>
</feature>
<sequence length="468" mass="51983">MFNSIGVIGLGVMGSNIALNMANKGENVAVYNYTRDLTDQLIQKLDGQSLSPYYELEDFVQSLEKPRKIFLMVTAGKPVDSVIQSLKPLLEEGDVIMDGGNSHYEDTERRYDELKEKGIGYLGVGISGGEVGALTGPSIMPGGDRDVYEKAAPILTKIAAQVGDDPCCVYIGPKGAGHFTKMVHNGIEYADMQLIAEAYTFLRETLRLPLDEIASIFETWNQGELKSYLIEITAEILRKKDEKTGQPLIDVILDKTGQKGTGKWTSMQAIDNGIPSTIITESLFARYLSSLKEERMAAQDVLAGPEAEEKHLDKDTWIEYVRQALYMGKVCAYAQGFAQYKMSSELYGWNLPLKDIALIFRGGCIIRADFLNVISEAFSEQPNLANLLIAPYFTDKLHAYQTGLRKVVCEGISTGISFPCLTTALSYYDGYRTGRSNANLLQAQRDYFGAHTYERTDMDGVFHTNWSE</sequence>
<organism>
    <name type="scientific">Bacillus subtilis (strain 168)</name>
    <dbReference type="NCBI Taxonomy" id="224308"/>
    <lineage>
        <taxon>Bacteria</taxon>
        <taxon>Bacillati</taxon>
        <taxon>Bacillota</taxon>
        <taxon>Bacilli</taxon>
        <taxon>Bacillales</taxon>
        <taxon>Bacillaceae</taxon>
        <taxon>Bacillus</taxon>
    </lineage>
</organism>
<reference key="1">
    <citation type="journal article" date="1986" name="J. Biol. Chem.">
        <title>Organization and transcription of the gluconate operon, gnt, of Bacillus subtilis.</title>
        <authorList>
            <person name="Fujita Y."/>
            <person name="Fujita T."/>
            <person name="Miwa Y."/>
            <person name="Nihashi J."/>
            <person name="Aratani Y."/>
        </authorList>
    </citation>
    <scope>NUCLEOTIDE SEQUENCE [GENOMIC DNA]</scope>
</reference>
<reference key="2">
    <citation type="journal article" date="1995" name="DNA Res.">
        <title>Cloning and sequencing of a 36-kb region of the Bacillus subtilis genome between the gnt and iol operons.</title>
        <authorList>
            <person name="Yoshida K."/>
            <person name="Seki S."/>
            <person name="Fujimura M."/>
            <person name="Miwa Y."/>
            <person name="Fujita Y."/>
        </authorList>
    </citation>
    <scope>NUCLEOTIDE SEQUENCE [GENOMIC DNA]</scope>
    <source>
        <strain>168 / BGSC1A1</strain>
    </source>
</reference>
<reference key="3">
    <citation type="journal article" date="1997" name="Nature">
        <title>The complete genome sequence of the Gram-positive bacterium Bacillus subtilis.</title>
        <authorList>
            <person name="Kunst F."/>
            <person name="Ogasawara N."/>
            <person name="Moszer I."/>
            <person name="Albertini A.M."/>
            <person name="Alloni G."/>
            <person name="Azevedo V."/>
            <person name="Bertero M.G."/>
            <person name="Bessieres P."/>
            <person name="Bolotin A."/>
            <person name="Borchert S."/>
            <person name="Borriss R."/>
            <person name="Boursier L."/>
            <person name="Brans A."/>
            <person name="Braun M."/>
            <person name="Brignell S.C."/>
            <person name="Bron S."/>
            <person name="Brouillet S."/>
            <person name="Bruschi C.V."/>
            <person name="Caldwell B."/>
            <person name="Capuano V."/>
            <person name="Carter N.M."/>
            <person name="Choi S.-K."/>
            <person name="Codani J.-J."/>
            <person name="Connerton I.F."/>
            <person name="Cummings N.J."/>
            <person name="Daniel R.A."/>
            <person name="Denizot F."/>
            <person name="Devine K.M."/>
            <person name="Duesterhoeft A."/>
            <person name="Ehrlich S.D."/>
            <person name="Emmerson P.T."/>
            <person name="Entian K.-D."/>
            <person name="Errington J."/>
            <person name="Fabret C."/>
            <person name="Ferrari E."/>
            <person name="Foulger D."/>
            <person name="Fritz C."/>
            <person name="Fujita M."/>
            <person name="Fujita Y."/>
            <person name="Fuma S."/>
            <person name="Galizzi A."/>
            <person name="Galleron N."/>
            <person name="Ghim S.-Y."/>
            <person name="Glaser P."/>
            <person name="Goffeau A."/>
            <person name="Golightly E.J."/>
            <person name="Grandi G."/>
            <person name="Guiseppi G."/>
            <person name="Guy B.J."/>
            <person name="Haga K."/>
            <person name="Haiech J."/>
            <person name="Harwood C.R."/>
            <person name="Henaut A."/>
            <person name="Hilbert H."/>
            <person name="Holsappel S."/>
            <person name="Hosono S."/>
            <person name="Hullo M.-F."/>
            <person name="Itaya M."/>
            <person name="Jones L.-M."/>
            <person name="Joris B."/>
            <person name="Karamata D."/>
            <person name="Kasahara Y."/>
            <person name="Klaerr-Blanchard M."/>
            <person name="Klein C."/>
            <person name="Kobayashi Y."/>
            <person name="Koetter P."/>
            <person name="Koningstein G."/>
            <person name="Krogh S."/>
            <person name="Kumano M."/>
            <person name="Kurita K."/>
            <person name="Lapidus A."/>
            <person name="Lardinois S."/>
            <person name="Lauber J."/>
            <person name="Lazarevic V."/>
            <person name="Lee S.-M."/>
            <person name="Levine A."/>
            <person name="Liu H."/>
            <person name="Masuda S."/>
            <person name="Mauel C."/>
            <person name="Medigue C."/>
            <person name="Medina N."/>
            <person name="Mellado R.P."/>
            <person name="Mizuno M."/>
            <person name="Moestl D."/>
            <person name="Nakai S."/>
            <person name="Noback M."/>
            <person name="Noone D."/>
            <person name="O'Reilly M."/>
            <person name="Ogawa K."/>
            <person name="Ogiwara A."/>
            <person name="Oudega B."/>
            <person name="Park S.-H."/>
            <person name="Parro V."/>
            <person name="Pohl T.M."/>
            <person name="Portetelle D."/>
            <person name="Porwollik S."/>
            <person name="Prescott A.M."/>
            <person name="Presecan E."/>
            <person name="Pujic P."/>
            <person name="Purnelle B."/>
            <person name="Rapoport G."/>
            <person name="Rey M."/>
            <person name="Reynolds S."/>
            <person name="Rieger M."/>
            <person name="Rivolta C."/>
            <person name="Rocha E."/>
            <person name="Roche B."/>
            <person name="Rose M."/>
            <person name="Sadaie Y."/>
            <person name="Sato T."/>
            <person name="Scanlan E."/>
            <person name="Schleich S."/>
            <person name="Schroeter R."/>
            <person name="Scoffone F."/>
            <person name="Sekiguchi J."/>
            <person name="Sekowska A."/>
            <person name="Seror S.J."/>
            <person name="Serror P."/>
            <person name="Shin B.-S."/>
            <person name="Soldo B."/>
            <person name="Sorokin A."/>
            <person name="Tacconi E."/>
            <person name="Takagi T."/>
            <person name="Takahashi H."/>
            <person name="Takemaru K."/>
            <person name="Takeuchi M."/>
            <person name="Tamakoshi A."/>
            <person name="Tanaka T."/>
            <person name="Terpstra P."/>
            <person name="Tognoni A."/>
            <person name="Tosato V."/>
            <person name="Uchiyama S."/>
            <person name="Vandenbol M."/>
            <person name="Vannier F."/>
            <person name="Vassarotti A."/>
            <person name="Viari A."/>
            <person name="Wambutt R."/>
            <person name="Wedler E."/>
            <person name="Wedler H."/>
            <person name="Weitzenegger T."/>
            <person name="Winters P."/>
            <person name="Wipat A."/>
            <person name="Yamamoto H."/>
            <person name="Yamane K."/>
            <person name="Yasumoto K."/>
            <person name="Yata K."/>
            <person name="Yoshida K."/>
            <person name="Yoshikawa H.-F."/>
            <person name="Zumstein E."/>
            <person name="Yoshikawa H."/>
            <person name="Danchin A."/>
        </authorList>
    </citation>
    <scope>NUCLEOTIDE SEQUENCE [LARGE SCALE GENOMIC DNA]</scope>
    <source>
        <strain>168</strain>
    </source>
</reference>
<reference key="4">
    <citation type="journal article" date="1997" name="DNA Res.">
        <title>Sequence analysis of the 36-kb region between gntZ and trnY genes of Bacillus subtilis genome.</title>
        <authorList>
            <person name="Kasahara Y."/>
            <person name="Nakai S."/>
            <person name="Ogasawara N."/>
        </authorList>
    </citation>
    <scope>NUCLEOTIDE SEQUENCE [GENOMIC DNA] OF 460-468</scope>
    <source>
        <strain>168</strain>
    </source>
</reference>
<reference key="5">
    <citation type="journal article" date="1991" name="Mol. Microbiol.">
        <title>Analysis of the gluconate (gnt) operon of Bacillus subtilis.</title>
        <authorList>
            <person name="Reizer A."/>
            <person name="Deutscher J."/>
            <person name="Saier M.H. Jr."/>
            <person name="Reizer J."/>
        </authorList>
    </citation>
    <scope>PROBABLE FUNCTION</scope>
</reference>
<reference key="6">
    <citation type="journal article" date="2004" name="J. Bacteriol.">
        <title>The Bacillus subtilis yqjI gene encodes the NADP+-dependent 6-P-gluconate dehydrogenase in the pentose phosphate pathway.</title>
        <authorList>
            <person name="Zamboni N."/>
            <person name="Fischer E."/>
            <person name="Laudert D."/>
            <person name="Aymerich S."/>
            <person name="Hohmann H.P."/>
            <person name="Sauer U."/>
        </authorList>
    </citation>
    <scope>FUNCTION</scope>
    <scope>CATALYTIC ACTIVITY</scope>
    <scope>DISRUPTION PHENOTYPE</scope>
    <source>
        <strain>168</strain>
    </source>
</reference>
<keyword id="KW-0311">Gluconate utilization</keyword>
<keyword id="KW-0520">NAD</keyword>
<keyword id="KW-0560">Oxidoreductase</keyword>
<keyword id="KW-1185">Reference proteome</keyword>
<comment type="function">
    <text evidence="2">Catalyzes the oxidative decarboxylation of 6-phosphogluconate to ribulose 5-phosphate and CO(2), with concomitant reduction of NAD to NADH. Does not contribute to oxidative pentose phosphate (PP) pathway fluxes during growth on glucose. The functional role of GntZ remains obscure.</text>
</comment>
<comment type="catalytic activity">
    <reaction evidence="2">
        <text>6-phospho-D-gluconate + NAD(+) = D-ribulose 5-phosphate + CO2 + NADH</text>
        <dbReference type="Rhea" id="RHEA:33023"/>
        <dbReference type="ChEBI" id="CHEBI:16526"/>
        <dbReference type="ChEBI" id="CHEBI:57540"/>
        <dbReference type="ChEBI" id="CHEBI:57945"/>
        <dbReference type="ChEBI" id="CHEBI:58121"/>
        <dbReference type="ChEBI" id="CHEBI:58759"/>
        <dbReference type="EC" id="1.1.1.343"/>
    </reaction>
</comment>
<comment type="subunit">
    <text evidence="1">Homodimer.</text>
</comment>
<comment type="disruption phenotype">
    <text evidence="2">Cells lacking this gene exhibit no detectable phenotype on glucose as the sole carbon source, and they grow normally on gluconate.</text>
</comment>
<comment type="similarity">
    <text evidence="3">Belongs to the 6-phosphogluconate dehydrogenase family.</text>
</comment>
<name>6PGDH_BACSU</name>